<organism>
    <name type="scientific">Haemophilus influenzae (strain ATCC 51907 / DSM 11121 / KW20 / Rd)</name>
    <dbReference type="NCBI Taxonomy" id="71421"/>
    <lineage>
        <taxon>Bacteria</taxon>
        <taxon>Pseudomonadati</taxon>
        <taxon>Pseudomonadota</taxon>
        <taxon>Gammaproteobacteria</taxon>
        <taxon>Pasteurellales</taxon>
        <taxon>Pasteurellaceae</taxon>
        <taxon>Haemophilus</taxon>
    </lineage>
</organism>
<accession>P44542</accession>
<feature type="signal peptide" evidence="5">
    <location>
        <begin position="1"/>
        <end position="23"/>
    </location>
</feature>
<feature type="chain" id="PRO_0000031816" description="Sialic acid-binding periplasmic protein SiaP">
    <location>
        <begin position="24"/>
        <end position="329"/>
    </location>
</feature>
<feature type="binding site" evidence="3 4 11 12">
    <location>
        <position position="33"/>
    </location>
    <ligand>
        <name>N-acetyl-beta-neuraminate</name>
        <dbReference type="ChEBI" id="CHEBI:58705"/>
    </ligand>
</feature>
<feature type="binding site" evidence="3 4 11 12">
    <location>
        <position position="72"/>
    </location>
    <ligand>
        <name>N-acetyl-beta-neuraminate</name>
        <dbReference type="ChEBI" id="CHEBI:58705"/>
    </ligand>
</feature>
<feature type="binding site" evidence="3 4 11 12">
    <location>
        <position position="90"/>
    </location>
    <ligand>
        <name>N-acetyl-beta-neuraminate</name>
        <dbReference type="ChEBI" id="CHEBI:58705"/>
    </ligand>
</feature>
<feature type="binding site" evidence="3 4 11 12">
    <location>
        <position position="150"/>
    </location>
    <ligand>
        <name>N-acetyl-beta-neuraminate</name>
        <dbReference type="ChEBI" id="CHEBI:58705"/>
    </ligand>
</feature>
<feature type="binding site" evidence="3 4 11 12">
    <location>
        <position position="170"/>
    </location>
    <ligand>
        <name>N-acetyl-beta-neuraminate</name>
        <dbReference type="ChEBI" id="CHEBI:58705"/>
    </ligand>
</feature>
<feature type="binding site" evidence="3 4 11 12">
    <location>
        <position position="210"/>
    </location>
    <ligand>
        <name>N-acetyl-beta-neuraminate</name>
        <dbReference type="ChEBI" id="CHEBI:58705"/>
    </ligand>
</feature>
<feature type="mutagenesis site" description="Complete loss of incorporation of N-acetyl-beta-neuraminate into the LOS." evidence="3">
    <original>D</original>
    <variation>A</variation>
    <location>
        <position position="72"/>
    </location>
</feature>
<feature type="mutagenesis site" description="Complete loss of incorporation of N-acetyl-beta-neuraminate into the LOS." evidence="3">
    <original>T</original>
    <variation>R</variation>
    <location>
        <position position="87"/>
    </location>
</feature>
<feature type="mutagenesis site" description="Complete loss of incorporation of N-acetyl-beta-neuraminate into the LOS." evidence="3">
    <original>R</original>
    <variation>A</variation>
    <location>
        <position position="150"/>
    </location>
</feature>
<feature type="mutagenesis site" description="Reduced incorporation of N-acetyl-beta-neuraminate into the LOS." evidence="3">
    <original>R</original>
    <variation>K</variation>
    <location>
        <position position="150"/>
    </location>
</feature>
<feature type="mutagenesis site" description="Complete loss of incorporation of N-acetyl-beta-neuraminate into the LOS. Large defect in N-acetyl-beta-neuraminate uptake and binding." evidence="3 4">
    <original>R</original>
    <variation>A</variation>
    <variation>K</variation>
    <location>
        <position position="170"/>
    </location>
</feature>
<feature type="strand" evidence="13">
    <location>
        <begin position="26"/>
        <end position="31"/>
    </location>
</feature>
<feature type="helix" evidence="13">
    <location>
        <begin position="39"/>
        <end position="54"/>
    </location>
</feature>
<feature type="turn" evidence="13">
    <location>
        <begin position="55"/>
        <end position="57"/>
    </location>
</feature>
<feature type="strand" evidence="13">
    <location>
        <begin position="58"/>
        <end position="64"/>
    </location>
</feature>
<feature type="turn" evidence="13">
    <location>
        <begin position="66"/>
        <end position="69"/>
    </location>
</feature>
<feature type="helix" evidence="13">
    <location>
        <begin position="72"/>
        <end position="80"/>
    </location>
</feature>
<feature type="strand" evidence="13">
    <location>
        <begin position="86"/>
        <end position="89"/>
    </location>
</feature>
<feature type="helix" evidence="13">
    <location>
        <begin position="91"/>
        <end position="96"/>
    </location>
</feature>
<feature type="helix" evidence="13">
    <location>
        <begin position="99"/>
        <end position="105"/>
    </location>
</feature>
<feature type="turn" evidence="13">
    <location>
        <begin position="107"/>
        <end position="109"/>
    </location>
</feature>
<feature type="helix" evidence="13">
    <location>
        <begin position="113"/>
        <end position="121"/>
    </location>
</feature>
<feature type="helix" evidence="13">
    <location>
        <begin position="124"/>
        <end position="137"/>
    </location>
</feature>
<feature type="strand" evidence="13">
    <location>
        <begin position="139"/>
        <end position="156"/>
    </location>
</feature>
<feature type="helix" evidence="13">
    <location>
        <begin position="161"/>
        <end position="164"/>
    </location>
</feature>
<feature type="strand" evidence="13">
    <location>
        <begin position="168"/>
        <end position="171"/>
    </location>
</feature>
<feature type="helix" evidence="13">
    <location>
        <begin position="175"/>
        <end position="184"/>
    </location>
</feature>
<feature type="strand" evidence="13">
    <location>
        <begin position="187"/>
        <end position="190"/>
    </location>
</feature>
<feature type="helix" evidence="13">
    <location>
        <begin position="193"/>
        <end position="195"/>
    </location>
</feature>
<feature type="helix" evidence="13">
    <location>
        <begin position="196"/>
        <end position="201"/>
    </location>
</feature>
<feature type="strand" evidence="13">
    <location>
        <begin position="204"/>
        <end position="211"/>
    </location>
</feature>
<feature type="helix" evidence="13">
    <location>
        <begin position="212"/>
        <end position="217"/>
    </location>
</feature>
<feature type="helix" evidence="13">
    <location>
        <begin position="220"/>
        <end position="222"/>
    </location>
</feature>
<feature type="strand" evidence="13">
    <location>
        <begin position="225"/>
        <end position="228"/>
    </location>
</feature>
<feature type="strand" evidence="13">
    <location>
        <begin position="234"/>
        <end position="242"/>
    </location>
</feature>
<feature type="helix" evidence="13">
    <location>
        <begin position="243"/>
        <end position="246"/>
    </location>
</feature>
<feature type="helix" evidence="13">
    <location>
        <begin position="251"/>
        <end position="285"/>
    </location>
</feature>
<feature type="strand" evidence="13">
    <location>
        <begin position="289"/>
        <end position="291"/>
    </location>
</feature>
<feature type="helix" evidence="13">
    <location>
        <begin position="296"/>
        <end position="301"/>
    </location>
</feature>
<feature type="helix" evidence="13">
    <location>
        <begin position="303"/>
        <end position="325"/>
    </location>
</feature>
<comment type="function">
    <text evidence="1 3 4">Part of the tripartite ATP-independent periplasmic (TRAP) transport system SiaPT involved in the uptake of sialic acid (N-acetyl-beta-neuraminate). This protein specifically binds sialic acid with high affinity. N-Acetylneuraminate (sialic acid) can then be incorporated into the lipooligosaccharides (LOS) as a terminal non-reducing sugar, protecting the bacterium from complement-mediated killing by normal human serum.</text>
</comment>
<comment type="subunit">
    <text evidence="1 2">The complex comprises the extracytoplasmic solute receptor protein SiaP, and the fused transmembrane protein SiaT.</text>
</comment>
<comment type="subcellular location">
    <subcellularLocation>
        <location evidence="5">Periplasm</location>
    </subcellularLocation>
</comment>
<comment type="mass spectrometry" mass="34165.0" error="2.0" method="Electrospray" evidence="1"/>
<comment type="miscellaneous">
    <text>Is essential for lipopolysaccharide (LPS) sialylation and serum resistance.</text>
</comment>
<comment type="similarity">
    <text evidence="5">Belongs to the bacterial solute-binding protein 7 family.</text>
</comment>
<dbReference type="EMBL" id="L42023">
    <property type="protein sequence ID" value="AAC21818.1"/>
    <property type="molecule type" value="Genomic_DNA"/>
</dbReference>
<dbReference type="PIR" id="H64143">
    <property type="entry name" value="H64143"/>
</dbReference>
<dbReference type="RefSeq" id="NP_438315.1">
    <property type="nucleotide sequence ID" value="NC_000907.1"/>
</dbReference>
<dbReference type="PDB" id="2CEX">
    <property type="method" value="X-ray"/>
    <property type="resolution" value="2.20 A"/>
    <property type="chains" value="A/B/C/D=24-329"/>
</dbReference>
<dbReference type="PDB" id="2CEY">
    <property type="method" value="X-ray"/>
    <property type="resolution" value="1.70 A"/>
    <property type="chains" value="A=24-329"/>
</dbReference>
<dbReference type="PDB" id="2V4C">
    <property type="method" value="X-ray"/>
    <property type="resolution" value="1.70 A"/>
    <property type="chains" value="A=24-329"/>
</dbReference>
<dbReference type="PDB" id="2WX9">
    <property type="method" value="X-ray"/>
    <property type="resolution" value="1.37 A"/>
    <property type="chains" value="A=24-329"/>
</dbReference>
<dbReference type="PDB" id="2WYK">
    <property type="method" value="X-ray"/>
    <property type="resolution" value="1.50 A"/>
    <property type="chains" value="A=24-329"/>
</dbReference>
<dbReference type="PDB" id="2WYP">
    <property type="method" value="X-ray"/>
    <property type="resolution" value="1.50 A"/>
    <property type="chains" value="A=24-329"/>
</dbReference>
<dbReference type="PDB" id="2XA5">
    <property type="method" value="X-ray"/>
    <property type="resolution" value="1.09 A"/>
    <property type="chains" value="A=24-329"/>
</dbReference>
<dbReference type="PDB" id="2XWI">
    <property type="method" value="X-ray"/>
    <property type="resolution" value="2.20 A"/>
    <property type="chains" value="A=24-329"/>
</dbReference>
<dbReference type="PDB" id="2XWK">
    <property type="method" value="X-ray"/>
    <property type="resolution" value="1.49 A"/>
    <property type="chains" value="A=24-329"/>
</dbReference>
<dbReference type="PDB" id="2XWO">
    <property type="method" value="X-ray"/>
    <property type="resolution" value="1.54 A"/>
    <property type="chains" value="A=24-329"/>
</dbReference>
<dbReference type="PDB" id="2XWV">
    <property type="method" value="X-ray"/>
    <property type="resolution" value="1.05 A"/>
    <property type="chains" value="A=24-329"/>
</dbReference>
<dbReference type="PDB" id="2XXK">
    <property type="method" value="X-ray"/>
    <property type="resolution" value="1.48 A"/>
    <property type="chains" value="A=24-329"/>
</dbReference>
<dbReference type="PDB" id="3B50">
    <property type="method" value="X-ray"/>
    <property type="resolution" value="1.40 A"/>
    <property type="chains" value="A=24-329"/>
</dbReference>
<dbReference type="PDB" id="6H75">
    <property type="method" value="X-ray"/>
    <property type="resolution" value="1.45 A"/>
    <property type="chains" value="A=24-329"/>
</dbReference>
<dbReference type="PDB" id="6H76">
    <property type="method" value="X-ray"/>
    <property type="resolution" value="1.50 A"/>
    <property type="chains" value="A=24-329"/>
</dbReference>
<dbReference type="PDB" id="8CP7">
    <property type="method" value="X-ray"/>
    <property type="resolution" value="1.90 A"/>
    <property type="chains" value="A=24-329"/>
</dbReference>
<dbReference type="PDBsum" id="2CEX"/>
<dbReference type="PDBsum" id="2CEY"/>
<dbReference type="PDBsum" id="2V4C"/>
<dbReference type="PDBsum" id="2WX9"/>
<dbReference type="PDBsum" id="2WYK"/>
<dbReference type="PDBsum" id="2WYP"/>
<dbReference type="PDBsum" id="2XA5"/>
<dbReference type="PDBsum" id="2XWI"/>
<dbReference type="PDBsum" id="2XWK"/>
<dbReference type="PDBsum" id="2XWO"/>
<dbReference type="PDBsum" id="2XWV"/>
<dbReference type="PDBsum" id="2XXK"/>
<dbReference type="PDBsum" id="3B50"/>
<dbReference type="PDBsum" id="6H75"/>
<dbReference type="PDBsum" id="6H76"/>
<dbReference type="PDBsum" id="8CP7"/>
<dbReference type="SMR" id="P44542"/>
<dbReference type="STRING" id="71421.HI_0146"/>
<dbReference type="TCDB" id="2.A.56.1.3">
    <property type="family name" value="the tripartite atp-independent periplasmic transporter (trap-t) family"/>
</dbReference>
<dbReference type="EnsemblBacteria" id="AAC21818">
    <property type="protein sequence ID" value="AAC21818"/>
    <property type="gene ID" value="HI_0146"/>
</dbReference>
<dbReference type="KEGG" id="hin:HI_0146"/>
<dbReference type="PATRIC" id="fig|71421.8.peg.148"/>
<dbReference type="eggNOG" id="COG1638">
    <property type="taxonomic scope" value="Bacteria"/>
</dbReference>
<dbReference type="HOGENOM" id="CLU_036176_1_1_6"/>
<dbReference type="OrthoDB" id="8690069at2"/>
<dbReference type="PhylomeDB" id="P44542"/>
<dbReference type="BioCyc" id="HINF71421:G1GJ1-158-MONOMER"/>
<dbReference type="EvolutionaryTrace" id="P44542"/>
<dbReference type="Proteomes" id="UP000000579">
    <property type="component" value="Chromosome"/>
</dbReference>
<dbReference type="GO" id="GO:0030288">
    <property type="term" value="C:outer membrane-bounded periplasmic space"/>
    <property type="evidence" value="ECO:0007669"/>
    <property type="project" value="InterPro"/>
</dbReference>
<dbReference type="GO" id="GO:0055085">
    <property type="term" value="P:transmembrane transport"/>
    <property type="evidence" value="ECO:0007669"/>
    <property type="project" value="InterPro"/>
</dbReference>
<dbReference type="CDD" id="cd13672">
    <property type="entry name" value="PBP2_TRAP_Siap"/>
    <property type="match status" value="1"/>
</dbReference>
<dbReference type="Gene3D" id="3.40.190.170">
    <property type="entry name" value="Bacterial extracellular solute-binding protein, family 7"/>
    <property type="match status" value="1"/>
</dbReference>
<dbReference type="InterPro" id="IPR018389">
    <property type="entry name" value="DctP_fam"/>
</dbReference>
<dbReference type="InterPro" id="IPR004682">
    <property type="entry name" value="TRAP_DctP"/>
</dbReference>
<dbReference type="InterPro" id="IPR038404">
    <property type="entry name" value="TRAP_DctP_sf"/>
</dbReference>
<dbReference type="NCBIfam" id="TIGR00787">
    <property type="entry name" value="dctP"/>
    <property type="match status" value="1"/>
</dbReference>
<dbReference type="NCBIfam" id="NF037995">
    <property type="entry name" value="TRAP_S1"/>
    <property type="match status" value="1"/>
</dbReference>
<dbReference type="PANTHER" id="PTHR33376">
    <property type="match status" value="1"/>
</dbReference>
<dbReference type="PANTHER" id="PTHR33376:SF4">
    <property type="entry name" value="SIALIC ACID-BINDING PERIPLASMIC PROTEIN SIAP"/>
    <property type="match status" value="1"/>
</dbReference>
<dbReference type="Pfam" id="PF03480">
    <property type="entry name" value="DctP"/>
    <property type="match status" value="1"/>
</dbReference>
<dbReference type="PIRSF" id="PIRSF006470">
    <property type="entry name" value="DctB"/>
    <property type="match status" value="1"/>
</dbReference>
<dbReference type="SUPFAM" id="SSF53850">
    <property type="entry name" value="Periplasmic binding protein-like II"/>
    <property type="match status" value="1"/>
</dbReference>
<keyword id="KW-0002">3D-structure</keyword>
<keyword id="KW-0574">Periplasm</keyword>
<keyword id="KW-1185">Reference proteome</keyword>
<keyword id="KW-0732">Signal</keyword>
<keyword id="KW-0762">Sugar transport</keyword>
<keyword id="KW-0813">Transport</keyword>
<protein>
    <recommendedName>
        <fullName>Sialic acid-binding periplasmic protein SiaP</fullName>
    </recommendedName>
    <alternativeName>
        <fullName>Extracytoplasmic solute receptor protein SiaP</fullName>
    </alternativeName>
    <alternativeName>
        <fullName>N-acetylneuraminic-binding protein</fullName>
    </alternativeName>
    <alternativeName>
        <fullName>Neu5Ac-binding protein</fullName>
    </alternativeName>
</protein>
<reference key="1">
    <citation type="journal article" date="1995" name="Science">
        <title>Whole-genome random sequencing and assembly of Haemophilus influenzae Rd.</title>
        <authorList>
            <person name="Fleischmann R.D."/>
            <person name="Adams M.D."/>
            <person name="White O."/>
            <person name="Clayton R.A."/>
            <person name="Kirkness E.F."/>
            <person name="Kerlavage A.R."/>
            <person name="Bult C.J."/>
            <person name="Tomb J.-F."/>
            <person name="Dougherty B.A."/>
            <person name="Merrick J.M."/>
            <person name="McKenney K."/>
            <person name="Sutton G.G."/>
            <person name="FitzHugh W."/>
            <person name="Fields C.A."/>
            <person name="Gocayne J.D."/>
            <person name="Scott J.D."/>
            <person name="Shirley R."/>
            <person name="Liu L.-I."/>
            <person name="Glodek A."/>
            <person name="Kelley J.M."/>
            <person name="Weidman J.F."/>
            <person name="Phillips C.A."/>
            <person name="Spriggs T."/>
            <person name="Hedblom E."/>
            <person name="Cotton M.D."/>
            <person name="Utterback T.R."/>
            <person name="Hanna M.C."/>
            <person name="Nguyen D.T."/>
            <person name="Saudek D.M."/>
            <person name="Brandon R.C."/>
            <person name="Fine L.D."/>
            <person name="Fritchman J.L."/>
            <person name="Fuhrmann J.L."/>
            <person name="Geoghagen N.S.M."/>
            <person name="Gnehm C.L."/>
            <person name="McDonald L.A."/>
            <person name="Small K.V."/>
            <person name="Fraser C.M."/>
            <person name="Smith H.O."/>
            <person name="Venter J.C."/>
        </authorList>
    </citation>
    <scope>NUCLEOTIDE SEQUENCE [LARGE SCALE GENOMIC DNA]</scope>
    <source>
        <strain>ATCC 51907 / DSM 11121 / KW20 / Rd</strain>
    </source>
</reference>
<reference key="2">
    <citation type="journal article" date="2000" name="Electrophoresis">
        <title>Two-dimensional map of the proteome of Haemophilus influenzae.</title>
        <authorList>
            <person name="Langen H."/>
            <person name="Takacs B."/>
            <person name="Evers S."/>
            <person name="Berndt P."/>
            <person name="Lahm H.W."/>
            <person name="Wipf B."/>
            <person name="Gray C."/>
            <person name="Fountoulakis M."/>
        </authorList>
    </citation>
    <scope>IDENTIFICATION BY MASS SPECTROMETRY</scope>
    <source>
        <strain>ATCC 51907 / DSM 11121 / KW20 / Rd</strain>
    </source>
</reference>
<reference key="3">
    <citation type="journal article" date="2005" name="Mol. Microbiol.">
        <title>Sialic acid transport in Haemophilus influenzae is essential for lipopolysaccharide sialylation and serum resistance and is dependent on a novel tripartite ATP-independent periplasmic transporter.</title>
        <authorList>
            <person name="Severi E."/>
            <person name="Randle G."/>
            <person name="Kivlin P."/>
            <person name="Whitfield K."/>
            <person name="Young R."/>
            <person name="Moxon R."/>
            <person name="Kelly D."/>
            <person name="Hood D."/>
            <person name="Thomas G.H."/>
        </authorList>
    </citation>
    <scope>FUNCTION</scope>
    <scope>CHARACTERIZATION</scope>
    <scope>SUBUNIT</scope>
    <scope>MASS SPECTROMETRY</scope>
    <source>
        <strain>ATCC 51907 / DSM 11121 / KW20 / Rd</strain>
    </source>
</reference>
<reference evidence="6 7" key="4">
    <citation type="journal article" date="2006" name="J. Biol. Chem.">
        <title>Conservation of structure and mechanism in primary and secondary transporters exemplified by SiaP, a sialic acid binding virulence factor from Haemophilus influenzae.</title>
        <authorList>
            <person name="Mueller A."/>
            <person name="Severi E."/>
            <person name="Mulligan C."/>
            <person name="Watts A.G."/>
            <person name="Kelly D.J."/>
            <person name="Wilson K.S."/>
            <person name="Wilkinson A.J."/>
            <person name="Thomas G.H."/>
        </authorList>
    </citation>
    <scope>X-RAY CRYSTALLOGRAPHY (1.7 ANGSTROMS) OF 24-329 IN COMPLEX WITH SIALIC ACID ANALOG</scope>
</reference>
<reference evidence="12" key="5">
    <citation type="journal article" date="2008" name="J. Biol. Chem.">
        <title>Characterization of the N-acetyl-5-neuraminic acid-binding site of the extracytoplasmic solute receptor (SiaP) of nontypeable Haemophilus influenzae strain 2019.</title>
        <authorList>
            <person name="Johnston J.W."/>
            <person name="Coussens N.P."/>
            <person name="Allen S."/>
            <person name="Houtman J.C."/>
            <person name="Turner K.H."/>
            <person name="Zaleski A."/>
            <person name="Ramaswamy S."/>
            <person name="Gibson B.W."/>
            <person name="Apicella M.A."/>
        </authorList>
    </citation>
    <scope>X-RAY CRYSTALLOGRAPHY (1.40 ANGSTROMS) OF 24-329 IN COMPLEX WITH N-ACETYL-BETA-NEURAMINATE</scope>
    <scope>FUNCTION</scope>
    <scope>MUTAGENESIS OF ASP-72; THR-87; ARG-150 AND ARG-170</scope>
    <source>
        <strain>NTHi 2019</strain>
    </source>
</reference>
<reference evidence="8 9 10 11" key="6">
    <citation type="journal article" date="2015" name="J. Biol. Chem.">
        <title>Tripartite ATP-independent Periplasmic (TRAP) Transporters Use an Arginine-mediated Selectivity Filter for High Affinity Substrate Binding.</title>
        <authorList>
            <person name="Fischer M."/>
            <person name="Hopkins A.P."/>
            <person name="Severi E."/>
            <person name="Hawkhead J."/>
            <person name="Bawdon D."/>
            <person name="Watts A.G."/>
            <person name="Hubbard R.E."/>
            <person name="Thomas G.H."/>
        </authorList>
    </citation>
    <scope>X-RAY CRYSTALLOGRAPHY (1.05 ANGSTROMS) OF 24-329 OF WILD-TYPE AND MUTANTS ALA-170; GLU-170 AND LYS-170 IN COMPLEX WITH N-ACETYL-BETA-NEURAMINATE</scope>
    <scope>FUNCTION</scope>
    <scope>MUTAGENESIS OF ARG-170</scope>
    <source>
        <strain>ATCC 51907 / DSM 11121 / KW20 / Rd</strain>
    </source>
</reference>
<gene>
    <name type="primary">siaP</name>
    <name type="ordered locus">HI_0146</name>
</gene>
<proteinExistence type="evidence at protein level"/>
<name>SIAP_HAEIN</name>
<sequence length="329" mass="36513">MMKLTKLFLATAISLGVSSAVLAADYDLKFGMNAGTSSNEYKAAEMFAKEVKEKSQGKIEISLYPSSQLGDDRAMLKQLKDGSLDFTFAESARFQLFYPEAAVFALPYVISNYNVAQKALFDTEFGKDLIKKMDKDLGVTLLSQAYNGTRQTTSNRAINSIADMKGLKLRVPNAATNLAYAKYVGASPTPMAFSEVYLALQTNAVDGQENPLAAVQAQKFYEVQKFLAMTNHILNDQLYLVSNETYKELPEDLQKVVKDAAENAAKYHTKLFVDGEKDLVTFFEKQGVKITHPDLVPFKESMKPYYAEFVKQTGQKGESALKQIEAINP</sequence>
<evidence type="ECO:0000269" key="1">
    <source>
    </source>
</evidence>
<evidence type="ECO:0000269" key="2">
    <source>
    </source>
</evidence>
<evidence type="ECO:0000269" key="3">
    <source>
    </source>
</evidence>
<evidence type="ECO:0000269" key="4">
    <source>
    </source>
</evidence>
<evidence type="ECO:0000305" key="5"/>
<evidence type="ECO:0007744" key="6">
    <source>
        <dbReference type="PDB" id="2CEX"/>
    </source>
</evidence>
<evidence type="ECO:0007744" key="7">
    <source>
        <dbReference type="PDB" id="2CEY"/>
    </source>
</evidence>
<evidence type="ECO:0007744" key="8">
    <source>
        <dbReference type="PDB" id="2XWI"/>
    </source>
</evidence>
<evidence type="ECO:0007744" key="9">
    <source>
        <dbReference type="PDB" id="2XWK"/>
    </source>
</evidence>
<evidence type="ECO:0007744" key="10">
    <source>
        <dbReference type="PDB" id="2XWO"/>
    </source>
</evidence>
<evidence type="ECO:0007744" key="11">
    <source>
        <dbReference type="PDB" id="2XWV"/>
    </source>
</evidence>
<evidence type="ECO:0007744" key="12">
    <source>
        <dbReference type="PDB" id="3B50"/>
    </source>
</evidence>
<evidence type="ECO:0007829" key="13">
    <source>
        <dbReference type="PDB" id="2XWV"/>
    </source>
</evidence>